<comment type="function">
    <text evidence="1">Participates actively in the response to hyperosmotic and heat shock by preventing the aggregation of stress-denatured proteins and by disaggregating proteins, also in an autonomous, DnaK-independent fashion. Unfolded proteins bind initially to DnaJ; upon interaction with the DnaJ-bound protein, DnaK hydrolyzes its bound ATP, resulting in the formation of a stable complex. GrpE releases ADP from DnaK; ATP binding to DnaK triggers the release of the substrate protein, thus completing the reaction cycle. Several rounds of ATP-dependent interactions between DnaJ, DnaK and GrpE are required for fully efficient folding. Also involved, together with DnaK and GrpE, in the DNA replication of plasmids through activation of initiation proteins.</text>
</comment>
<comment type="cofactor">
    <cofactor evidence="1">
        <name>Zn(2+)</name>
        <dbReference type="ChEBI" id="CHEBI:29105"/>
    </cofactor>
    <text evidence="1">Binds 2 Zn(2+) ions per monomer.</text>
</comment>
<comment type="subunit">
    <text evidence="1">Homodimer.</text>
</comment>
<comment type="subcellular location">
    <subcellularLocation>
        <location evidence="1">Cytoplasm</location>
    </subcellularLocation>
</comment>
<comment type="domain">
    <text evidence="1">The J domain is necessary and sufficient to stimulate DnaK ATPase activity. Zinc center 1 plays an important role in the autonomous, DnaK-independent chaperone activity of DnaJ. Zinc center 2 is essential for interaction with DnaK and for DnaJ activity.</text>
</comment>
<comment type="similarity">
    <text evidence="1">Belongs to the DnaJ family.</text>
</comment>
<accession>B7JN38</accession>
<proteinExistence type="inferred from homology"/>
<organism>
    <name type="scientific">Bacillus cereus (strain AH820)</name>
    <dbReference type="NCBI Taxonomy" id="405535"/>
    <lineage>
        <taxon>Bacteria</taxon>
        <taxon>Bacillati</taxon>
        <taxon>Bacillota</taxon>
        <taxon>Bacilli</taxon>
        <taxon>Bacillales</taxon>
        <taxon>Bacillaceae</taxon>
        <taxon>Bacillus</taxon>
        <taxon>Bacillus cereus group</taxon>
    </lineage>
</organism>
<keyword id="KW-0143">Chaperone</keyword>
<keyword id="KW-0963">Cytoplasm</keyword>
<keyword id="KW-0235">DNA replication</keyword>
<keyword id="KW-0479">Metal-binding</keyword>
<keyword id="KW-0677">Repeat</keyword>
<keyword id="KW-0346">Stress response</keyword>
<keyword id="KW-0862">Zinc</keyword>
<keyword id="KW-0863">Zinc-finger</keyword>
<feature type="chain" id="PRO_1000137657" description="Chaperone protein DnaJ">
    <location>
        <begin position="1"/>
        <end position="371"/>
    </location>
</feature>
<feature type="domain" description="J" evidence="1">
    <location>
        <begin position="5"/>
        <end position="69"/>
    </location>
</feature>
<feature type="repeat" description="CXXCXGXG motif">
    <location>
        <begin position="146"/>
        <end position="153"/>
    </location>
</feature>
<feature type="repeat" description="CXXCXGXG motif">
    <location>
        <begin position="163"/>
        <end position="170"/>
    </location>
</feature>
<feature type="repeat" description="CXXCXGXG motif">
    <location>
        <begin position="189"/>
        <end position="196"/>
    </location>
</feature>
<feature type="repeat" description="CXXCXGXG motif">
    <location>
        <begin position="203"/>
        <end position="210"/>
    </location>
</feature>
<feature type="zinc finger region" description="CR-type" evidence="1">
    <location>
        <begin position="133"/>
        <end position="215"/>
    </location>
</feature>
<feature type="binding site" evidence="1">
    <location>
        <position position="146"/>
    </location>
    <ligand>
        <name>Zn(2+)</name>
        <dbReference type="ChEBI" id="CHEBI:29105"/>
        <label>1</label>
    </ligand>
</feature>
<feature type="binding site" evidence="1">
    <location>
        <position position="149"/>
    </location>
    <ligand>
        <name>Zn(2+)</name>
        <dbReference type="ChEBI" id="CHEBI:29105"/>
        <label>1</label>
    </ligand>
</feature>
<feature type="binding site" evidence="1">
    <location>
        <position position="163"/>
    </location>
    <ligand>
        <name>Zn(2+)</name>
        <dbReference type="ChEBI" id="CHEBI:29105"/>
        <label>2</label>
    </ligand>
</feature>
<feature type="binding site" evidence="1">
    <location>
        <position position="166"/>
    </location>
    <ligand>
        <name>Zn(2+)</name>
        <dbReference type="ChEBI" id="CHEBI:29105"/>
        <label>2</label>
    </ligand>
</feature>
<feature type="binding site" evidence="1">
    <location>
        <position position="189"/>
    </location>
    <ligand>
        <name>Zn(2+)</name>
        <dbReference type="ChEBI" id="CHEBI:29105"/>
        <label>2</label>
    </ligand>
</feature>
<feature type="binding site" evidence="1">
    <location>
        <position position="192"/>
    </location>
    <ligand>
        <name>Zn(2+)</name>
        <dbReference type="ChEBI" id="CHEBI:29105"/>
        <label>2</label>
    </ligand>
</feature>
<feature type="binding site" evidence="1">
    <location>
        <position position="203"/>
    </location>
    <ligand>
        <name>Zn(2+)</name>
        <dbReference type="ChEBI" id="CHEBI:29105"/>
        <label>1</label>
    </ligand>
</feature>
<feature type="binding site" evidence="1">
    <location>
        <position position="206"/>
    </location>
    <ligand>
        <name>Zn(2+)</name>
        <dbReference type="ChEBI" id="CHEBI:29105"/>
        <label>1</label>
    </ligand>
</feature>
<name>DNAJ_BACC0</name>
<reference key="1">
    <citation type="submission" date="2008-10" db="EMBL/GenBank/DDBJ databases">
        <title>Genome sequence of Bacillus cereus AH820.</title>
        <authorList>
            <person name="Dodson R.J."/>
            <person name="Durkin A.S."/>
            <person name="Rosovitz M.J."/>
            <person name="Rasko D.A."/>
            <person name="Hoffmaster A."/>
            <person name="Ravel J."/>
            <person name="Sutton G."/>
        </authorList>
    </citation>
    <scope>NUCLEOTIDE SEQUENCE [LARGE SCALE GENOMIC DNA]</scope>
    <source>
        <strain>AH820</strain>
    </source>
</reference>
<protein>
    <recommendedName>
        <fullName evidence="1">Chaperone protein DnaJ</fullName>
    </recommendedName>
</protein>
<gene>
    <name evidence="1" type="primary">dnaJ</name>
    <name type="ordered locus">BCAH820_4335</name>
</gene>
<sequence>MSKRDYYEVLGLSKGASKDEIKKAYRRLAKKYHPDVSKEENAIEKFKEVQEAYEVLSDDQKRAQYDQFGHAGANQGFGGFGGGGDFGGGFGFEDIFSSFFGGGGGRRRDPNAPRQGADLQYQVTLEFEEAIFGKELNVEIPVEDPCDTCKGSGAKPGTSKETCKHCSGSGQVSVEQNTPFGRIVNRQACSHCSGTGQMIKEKCTTCHGSGKVRKRKKINVKIPAGIDNGQQIRVSGKGEAGVNGGPXGDLYVVVHVRSHEFFEREGDHIICEMPLTFAQMALGAEVEVPTVHGKVKLKIPAGTQTGTEFRLKGKGAPNVRGYGQGDQYVVVRVVVPTKLTSHQKDLLREFAGQEEQDDSLFGKLKRAFKGE</sequence>
<dbReference type="EMBL" id="CP001283">
    <property type="protein sequence ID" value="ACK88256.1"/>
    <property type="molecule type" value="Genomic_DNA"/>
</dbReference>
<dbReference type="RefSeq" id="WP_000043939.1">
    <property type="nucleotide sequence ID" value="NC_011773.1"/>
</dbReference>
<dbReference type="KEGG" id="bcu:BCAH820_4335"/>
<dbReference type="HOGENOM" id="CLU_017633_0_7_9"/>
<dbReference type="Proteomes" id="UP000001363">
    <property type="component" value="Chromosome"/>
</dbReference>
<dbReference type="GO" id="GO:0005737">
    <property type="term" value="C:cytoplasm"/>
    <property type="evidence" value="ECO:0007669"/>
    <property type="project" value="UniProtKB-SubCell"/>
</dbReference>
<dbReference type="GO" id="GO:0005524">
    <property type="term" value="F:ATP binding"/>
    <property type="evidence" value="ECO:0007669"/>
    <property type="project" value="InterPro"/>
</dbReference>
<dbReference type="GO" id="GO:0031072">
    <property type="term" value="F:heat shock protein binding"/>
    <property type="evidence" value="ECO:0007669"/>
    <property type="project" value="InterPro"/>
</dbReference>
<dbReference type="GO" id="GO:0051082">
    <property type="term" value="F:unfolded protein binding"/>
    <property type="evidence" value="ECO:0007669"/>
    <property type="project" value="UniProtKB-UniRule"/>
</dbReference>
<dbReference type="GO" id="GO:0008270">
    <property type="term" value="F:zinc ion binding"/>
    <property type="evidence" value="ECO:0007669"/>
    <property type="project" value="UniProtKB-UniRule"/>
</dbReference>
<dbReference type="GO" id="GO:0051085">
    <property type="term" value="P:chaperone cofactor-dependent protein refolding"/>
    <property type="evidence" value="ECO:0007669"/>
    <property type="project" value="TreeGrafter"/>
</dbReference>
<dbReference type="GO" id="GO:0006260">
    <property type="term" value="P:DNA replication"/>
    <property type="evidence" value="ECO:0007669"/>
    <property type="project" value="UniProtKB-KW"/>
</dbReference>
<dbReference type="GO" id="GO:0042026">
    <property type="term" value="P:protein refolding"/>
    <property type="evidence" value="ECO:0007669"/>
    <property type="project" value="TreeGrafter"/>
</dbReference>
<dbReference type="GO" id="GO:0009408">
    <property type="term" value="P:response to heat"/>
    <property type="evidence" value="ECO:0007669"/>
    <property type="project" value="InterPro"/>
</dbReference>
<dbReference type="CDD" id="cd06257">
    <property type="entry name" value="DnaJ"/>
    <property type="match status" value="1"/>
</dbReference>
<dbReference type="CDD" id="cd10747">
    <property type="entry name" value="DnaJ_C"/>
    <property type="match status" value="1"/>
</dbReference>
<dbReference type="CDD" id="cd10719">
    <property type="entry name" value="DnaJ_zf"/>
    <property type="match status" value="1"/>
</dbReference>
<dbReference type="FunFam" id="1.10.287.110:FF:000031">
    <property type="entry name" value="Molecular chaperone DnaJ"/>
    <property type="match status" value="1"/>
</dbReference>
<dbReference type="FunFam" id="2.10.230.10:FF:000002">
    <property type="entry name" value="Molecular chaperone DnaJ"/>
    <property type="match status" value="1"/>
</dbReference>
<dbReference type="FunFam" id="2.60.260.20:FF:000004">
    <property type="entry name" value="Molecular chaperone DnaJ"/>
    <property type="match status" value="1"/>
</dbReference>
<dbReference type="FunFam" id="2.60.260.20:FF:000009">
    <property type="entry name" value="Putative Mitochondrial DnaJ chaperone"/>
    <property type="match status" value="1"/>
</dbReference>
<dbReference type="Gene3D" id="6.20.20.10">
    <property type="match status" value="2"/>
</dbReference>
<dbReference type="Gene3D" id="1.10.287.110">
    <property type="entry name" value="DnaJ domain"/>
    <property type="match status" value="1"/>
</dbReference>
<dbReference type="Gene3D" id="2.60.260.20">
    <property type="entry name" value="Urease metallochaperone UreE, N-terminal domain"/>
    <property type="match status" value="2"/>
</dbReference>
<dbReference type="HAMAP" id="MF_01152">
    <property type="entry name" value="DnaJ"/>
    <property type="match status" value="1"/>
</dbReference>
<dbReference type="InterPro" id="IPR012724">
    <property type="entry name" value="DnaJ"/>
</dbReference>
<dbReference type="InterPro" id="IPR002939">
    <property type="entry name" value="DnaJ_C"/>
</dbReference>
<dbReference type="InterPro" id="IPR001623">
    <property type="entry name" value="DnaJ_domain"/>
</dbReference>
<dbReference type="InterPro" id="IPR018253">
    <property type="entry name" value="DnaJ_domain_CS"/>
</dbReference>
<dbReference type="InterPro" id="IPR008971">
    <property type="entry name" value="HSP40/DnaJ_pept-bd"/>
</dbReference>
<dbReference type="InterPro" id="IPR001305">
    <property type="entry name" value="HSP_DnaJ_Cys-rich_dom"/>
</dbReference>
<dbReference type="InterPro" id="IPR036410">
    <property type="entry name" value="HSP_DnaJ_Cys-rich_dom_sf"/>
</dbReference>
<dbReference type="InterPro" id="IPR036869">
    <property type="entry name" value="J_dom_sf"/>
</dbReference>
<dbReference type="NCBIfam" id="TIGR02349">
    <property type="entry name" value="DnaJ_bact"/>
    <property type="match status" value="1"/>
</dbReference>
<dbReference type="NCBIfam" id="NF008035">
    <property type="entry name" value="PRK10767.1"/>
    <property type="match status" value="1"/>
</dbReference>
<dbReference type="NCBIfam" id="NF010873">
    <property type="entry name" value="PRK14280.1"/>
    <property type="match status" value="1"/>
</dbReference>
<dbReference type="PANTHER" id="PTHR43096:SF48">
    <property type="entry name" value="CHAPERONE PROTEIN DNAJ"/>
    <property type="match status" value="1"/>
</dbReference>
<dbReference type="PANTHER" id="PTHR43096">
    <property type="entry name" value="DNAJ HOMOLOG 1, MITOCHONDRIAL-RELATED"/>
    <property type="match status" value="1"/>
</dbReference>
<dbReference type="Pfam" id="PF00226">
    <property type="entry name" value="DnaJ"/>
    <property type="match status" value="1"/>
</dbReference>
<dbReference type="Pfam" id="PF01556">
    <property type="entry name" value="DnaJ_C"/>
    <property type="match status" value="1"/>
</dbReference>
<dbReference type="Pfam" id="PF00684">
    <property type="entry name" value="DnaJ_CXXCXGXG"/>
    <property type="match status" value="1"/>
</dbReference>
<dbReference type="PRINTS" id="PR00625">
    <property type="entry name" value="JDOMAIN"/>
</dbReference>
<dbReference type="SMART" id="SM00271">
    <property type="entry name" value="DnaJ"/>
    <property type="match status" value="1"/>
</dbReference>
<dbReference type="SUPFAM" id="SSF46565">
    <property type="entry name" value="Chaperone J-domain"/>
    <property type="match status" value="1"/>
</dbReference>
<dbReference type="SUPFAM" id="SSF57938">
    <property type="entry name" value="DnaJ/Hsp40 cysteine-rich domain"/>
    <property type="match status" value="1"/>
</dbReference>
<dbReference type="SUPFAM" id="SSF49493">
    <property type="entry name" value="HSP40/DnaJ peptide-binding domain"/>
    <property type="match status" value="2"/>
</dbReference>
<dbReference type="PROSITE" id="PS00636">
    <property type="entry name" value="DNAJ_1"/>
    <property type="match status" value="1"/>
</dbReference>
<dbReference type="PROSITE" id="PS50076">
    <property type="entry name" value="DNAJ_2"/>
    <property type="match status" value="1"/>
</dbReference>
<dbReference type="PROSITE" id="PS51188">
    <property type="entry name" value="ZF_CR"/>
    <property type="match status" value="1"/>
</dbReference>
<evidence type="ECO:0000255" key="1">
    <source>
        <dbReference type="HAMAP-Rule" id="MF_01152"/>
    </source>
</evidence>